<dbReference type="EMBL" id="AY845029">
    <property type="protein sequence ID" value="AAX11927.1"/>
    <property type="molecule type" value="mRNA"/>
</dbReference>
<dbReference type="EMBL" id="AY845031">
    <property type="protein sequence ID" value="AAX11929.1"/>
    <property type="molecule type" value="mRNA"/>
</dbReference>
<dbReference type="EMBL" id="CR954168">
    <property type="protein sequence ID" value="CAK10899.2"/>
    <property type="molecule type" value="Genomic_DNA"/>
</dbReference>
<dbReference type="EMBL" id="CU469458">
    <property type="protein sequence ID" value="CAK10899.2"/>
    <property type="status" value="JOINED"/>
    <property type="molecule type" value="Genomic_DNA"/>
</dbReference>
<dbReference type="EMBL" id="CU469458">
    <property type="protein sequence ID" value="CAX13653.1"/>
    <property type="molecule type" value="Genomic_DNA"/>
</dbReference>
<dbReference type="EMBL" id="CR954168">
    <property type="protein sequence ID" value="CAX13653.1"/>
    <property type="status" value="JOINED"/>
    <property type="molecule type" value="Genomic_DNA"/>
</dbReference>
<dbReference type="RefSeq" id="NP_956613.2">
    <property type="nucleotide sequence ID" value="NM_200319.2"/>
</dbReference>
<dbReference type="SMR" id="Q2TLY2"/>
<dbReference type="FunCoup" id="Q2TLY2">
    <property type="interactions" value="2317"/>
</dbReference>
<dbReference type="STRING" id="7955.ENSDARP00000008156"/>
<dbReference type="GlyCosmos" id="Q2TLY2">
    <property type="glycosylation" value="5 sites, No reported glycans"/>
</dbReference>
<dbReference type="PaxDb" id="7955-ENSDARP00000008156"/>
<dbReference type="Ensembl" id="ENSDART00000009149">
    <property type="protein sequence ID" value="ENSDARP00000008156"/>
    <property type="gene ID" value="ENSDARG00000005625"/>
</dbReference>
<dbReference type="GeneID" id="393289"/>
<dbReference type="KEGG" id="dre:393289"/>
<dbReference type="AGR" id="ZFIN:ZDB-GENE-040426-1097"/>
<dbReference type="CTD" id="393289"/>
<dbReference type="ZFIN" id="ZDB-GENE-040426-1097">
    <property type="gene designation" value="maco1a"/>
</dbReference>
<dbReference type="eggNOG" id="KOG1821">
    <property type="taxonomic scope" value="Eukaryota"/>
</dbReference>
<dbReference type="HOGENOM" id="CLU_012823_1_0_1"/>
<dbReference type="InParanoid" id="Q2TLY2"/>
<dbReference type="OMA" id="ENTHADT"/>
<dbReference type="OrthoDB" id="10071111at2759"/>
<dbReference type="PhylomeDB" id="Q2TLY2"/>
<dbReference type="TreeFam" id="TF324023"/>
<dbReference type="PRO" id="PR:Q2TLY2"/>
<dbReference type="Proteomes" id="UP000000437">
    <property type="component" value="Chromosome 19"/>
</dbReference>
<dbReference type="Bgee" id="ENSDARG00000005625">
    <property type="expression patterns" value="Expressed in testis and 26 other cell types or tissues"/>
</dbReference>
<dbReference type="GO" id="GO:0031965">
    <property type="term" value="C:nuclear membrane"/>
    <property type="evidence" value="ECO:0000318"/>
    <property type="project" value="GO_Central"/>
</dbReference>
<dbReference type="GO" id="GO:0030867">
    <property type="term" value="C:rough endoplasmic reticulum membrane"/>
    <property type="evidence" value="ECO:0000318"/>
    <property type="project" value="GO_Central"/>
</dbReference>
<dbReference type="GO" id="GO:0008017">
    <property type="term" value="F:microtubule binding"/>
    <property type="evidence" value="ECO:0000318"/>
    <property type="project" value="GO_Central"/>
</dbReference>
<dbReference type="GO" id="GO:0006935">
    <property type="term" value="P:chemotaxis"/>
    <property type="evidence" value="ECO:0000318"/>
    <property type="project" value="GO_Central"/>
</dbReference>
<dbReference type="GO" id="GO:0023041">
    <property type="term" value="P:neuronal signal transduction"/>
    <property type="evidence" value="ECO:0000318"/>
    <property type="project" value="GO_Central"/>
</dbReference>
<dbReference type="InterPro" id="IPR019130">
    <property type="entry name" value="Macoilin"/>
</dbReference>
<dbReference type="PANTHER" id="PTHR47464">
    <property type="entry name" value="MACOILIN"/>
    <property type="match status" value="1"/>
</dbReference>
<dbReference type="PANTHER" id="PTHR47464:SF3">
    <property type="entry name" value="MACOILIN-2 ISOFORM X1"/>
    <property type="match status" value="1"/>
</dbReference>
<dbReference type="Pfam" id="PF09726">
    <property type="entry name" value="Macoilin"/>
    <property type="match status" value="1"/>
</dbReference>
<sequence>MKRRNADCSKLRRPLKRNRITEGIHSSTFLYLKFLVVWALVLLADFVLEFRFEYLWPFWLFIRSVYDSFRYQGLAFSVFFVCVAFTSDIICLLFIPKQWLFFAASTYVWVQYVWHTERGVCLPTVSLWILFVYIEAAIRFKDLKHFHVDLCRPFAAHCIGYPVVTLGFGFKSYVSYKMRLRKQKEVQKENEFYMQLLQQALPPEQQMLQRQERETEEATSKGMSEADSVLVAQNGTAINKKLPISLPELEYKEKGKDSAKDKKQQQHSIGINNNILQTVDAKLQDIEYMENHLNAKRLNNELGGSAENLFLKEEVGAGGGSAPSKHYKNSSPRSHNSTNGSVPSSSSNRSDKKQKCTGKNLAPHRDLMENCIPNNQLSKPDALVRLEQDIKKLKADLQASRQVEQDLRSQISSLSSAERSMRSELGQLRQENELLQNKLHNAVQAKQKDKQTIVQLEKRLKAEQEARAAVEKQLAEEKKRKKMEEATAARAVALAAASRGECTDSLKSRIRELESECKKLTHDMKLKEEQIRELELKAQELHKYKENEKDTEVLMSALSAMQDKTQHLENSLSAETRIKLDLFSALGDAKRQLEIAQGQILQKEQEIKELKQKIAEVMAVMPSITYSAETNNMTPVTPHYSSKFMDTSPSSLDPNASVYQPLKK</sequence>
<accession>Q2TLY2</accession>
<accession>Q1L869</accession>
<accession>Q2TLY0</accession>
<reference evidence="7" key="1">
    <citation type="submission" date="2004-12" db="EMBL/GenBank/DDBJ databases">
        <title>Identification of Macoilin as a novel membrane-associated coiled-coil tetraspanin protein.</title>
        <authorList>
            <person name="Huang C.-H."/>
            <person name="Chen Y."/>
        </authorList>
    </citation>
    <scope>NUCLEOTIDE SEQUENCE [MRNA]</scope>
</reference>
<reference key="2">
    <citation type="journal article" date="2013" name="Nature">
        <title>The zebrafish reference genome sequence and its relationship to the human genome.</title>
        <authorList>
            <person name="Howe K."/>
            <person name="Clark M.D."/>
            <person name="Torroja C.F."/>
            <person name="Torrance J."/>
            <person name="Berthelot C."/>
            <person name="Muffato M."/>
            <person name="Collins J.E."/>
            <person name="Humphray S."/>
            <person name="McLaren K."/>
            <person name="Matthews L."/>
            <person name="McLaren S."/>
            <person name="Sealy I."/>
            <person name="Caccamo M."/>
            <person name="Churcher C."/>
            <person name="Scott C."/>
            <person name="Barrett J.C."/>
            <person name="Koch R."/>
            <person name="Rauch G.J."/>
            <person name="White S."/>
            <person name="Chow W."/>
            <person name="Kilian B."/>
            <person name="Quintais L.T."/>
            <person name="Guerra-Assuncao J.A."/>
            <person name="Zhou Y."/>
            <person name="Gu Y."/>
            <person name="Yen J."/>
            <person name="Vogel J.H."/>
            <person name="Eyre T."/>
            <person name="Redmond S."/>
            <person name="Banerjee R."/>
            <person name="Chi J."/>
            <person name="Fu B."/>
            <person name="Langley E."/>
            <person name="Maguire S.F."/>
            <person name="Laird G.K."/>
            <person name="Lloyd D."/>
            <person name="Kenyon E."/>
            <person name="Donaldson S."/>
            <person name="Sehra H."/>
            <person name="Almeida-King J."/>
            <person name="Loveland J."/>
            <person name="Trevanion S."/>
            <person name="Jones M."/>
            <person name="Quail M."/>
            <person name="Willey D."/>
            <person name="Hunt A."/>
            <person name="Burton J."/>
            <person name="Sims S."/>
            <person name="McLay K."/>
            <person name="Plumb B."/>
            <person name="Davis J."/>
            <person name="Clee C."/>
            <person name="Oliver K."/>
            <person name="Clark R."/>
            <person name="Riddle C."/>
            <person name="Elliot D."/>
            <person name="Threadgold G."/>
            <person name="Harden G."/>
            <person name="Ware D."/>
            <person name="Begum S."/>
            <person name="Mortimore B."/>
            <person name="Kerry G."/>
            <person name="Heath P."/>
            <person name="Phillimore B."/>
            <person name="Tracey A."/>
            <person name="Corby N."/>
            <person name="Dunn M."/>
            <person name="Johnson C."/>
            <person name="Wood J."/>
            <person name="Clark S."/>
            <person name="Pelan S."/>
            <person name="Griffiths G."/>
            <person name="Smith M."/>
            <person name="Glithero R."/>
            <person name="Howden P."/>
            <person name="Barker N."/>
            <person name="Lloyd C."/>
            <person name="Stevens C."/>
            <person name="Harley J."/>
            <person name="Holt K."/>
            <person name="Panagiotidis G."/>
            <person name="Lovell J."/>
            <person name="Beasley H."/>
            <person name="Henderson C."/>
            <person name="Gordon D."/>
            <person name="Auger K."/>
            <person name="Wright D."/>
            <person name="Collins J."/>
            <person name="Raisen C."/>
            <person name="Dyer L."/>
            <person name="Leung K."/>
            <person name="Robertson L."/>
            <person name="Ambridge K."/>
            <person name="Leongamornlert D."/>
            <person name="McGuire S."/>
            <person name="Gilderthorp R."/>
            <person name="Griffiths C."/>
            <person name="Manthravadi D."/>
            <person name="Nichol S."/>
            <person name="Barker G."/>
            <person name="Whitehead S."/>
            <person name="Kay M."/>
            <person name="Brown J."/>
            <person name="Murnane C."/>
            <person name="Gray E."/>
            <person name="Humphries M."/>
            <person name="Sycamore N."/>
            <person name="Barker D."/>
            <person name="Saunders D."/>
            <person name="Wallis J."/>
            <person name="Babbage A."/>
            <person name="Hammond S."/>
            <person name="Mashreghi-Mohammadi M."/>
            <person name="Barr L."/>
            <person name="Martin S."/>
            <person name="Wray P."/>
            <person name="Ellington A."/>
            <person name="Matthews N."/>
            <person name="Ellwood M."/>
            <person name="Woodmansey R."/>
            <person name="Clark G."/>
            <person name="Cooper J."/>
            <person name="Tromans A."/>
            <person name="Grafham D."/>
            <person name="Skuce C."/>
            <person name="Pandian R."/>
            <person name="Andrews R."/>
            <person name="Harrison E."/>
            <person name="Kimberley A."/>
            <person name="Garnett J."/>
            <person name="Fosker N."/>
            <person name="Hall R."/>
            <person name="Garner P."/>
            <person name="Kelly D."/>
            <person name="Bird C."/>
            <person name="Palmer S."/>
            <person name="Gehring I."/>
            <person name="Berger A."/>
            <person name="Dooley C.M."/>
            <person name="Ersan-Urun Z."/>
            <person name="Eser C."/>
            <person name="Geiger H."/>
            <person name="Geisler M."/>
            <person name="Karotki L."/>
            <person name="Kirn A."/>
            <person name="Konantz J."/>
            <person name="Konantz M."/>
            <person name="Oberlander M."/>
            <person name="Rudolph-Geiger S."/>
            <person name="Teucke M."/>
            <person name="Lanz C."/>
            <person name="Raddatz G."/>
            <person name="Osoegawa K."/>
            <person name="Zhu B."/>
            <person name="Rapp A."/>
            <person name="Widaa S."/>
            <person name="Langford C."/>
            <person name="Yang F."/>
            <person name="Schuster S.C."/>
            <person name="Carter N.P."/>
            <person name="Harrow J."/>
            <person name="Ning Z."/>
            <person name="Herrero J."/>
            <person name="Searle S.M."/>
            <person name="Enright A."/>
            <person name="Geisler R."/>
            <person name="Plasterk R.H."/>
            <person name="Lee C."/>
            <person name="Westerfield M."/>
            <person name="de Jong P.J."/>
            <person name="Zon L.I."/>
            <person name="Postlethwait J.H."/>
            <person name="Nusslein-Volhard C."/>
            <person name="Hubbard T.J."/>
            <person name="Roest Crollius H."/>
            <person name="Rogers J."/>
            <person name="Stemple D.L."/>
        </authorList>
    </citation>
    <scope>NUCLEOTIDE SEQUENCE [LARGE SCALE GENOMIC DNA]</scope>
    <source>
        <strain>Tuebingen</strain>
    </source>
</reference>
<protein>
    <recommendedName>
        <fullName>Macoilin-1</fullName>
    </recommendedName>
    <alternativeName>
        <fullName>Transmembrane protein 57a</fullName>
    </alternativeName>
</protein>
<feature type="chain" id="PRO_0000408365" description="Macoilin-1">
    <location>
        <begin position="1"/>
        <end position="664"/>
    </location>
</feature>
<feature type="transmembrane region" description="Helical" evidence="4">
    <location>
        <begin position="28"/>
        <end position="48"/>
    </location>
</feature>
<feature type="transmembrane region" description="Helical" evidence="4">
    <location>
        <begin position="75"/>
        <end position="95"/>
    </location>
</feature>
<feature type="transmembrane region" description="Helical" evidence="4">
    <location>
        <begin position="120"/>
        <end position="140"/>
    </location>
</feature>
<feature type="transmembrane region" description="Helical" evidence="4">
    <location>
        <begin position="154"/>
        <end position="174"/>
    </location>
</feature>
<feature type="region of interest" description="Disordered" evidence="5">
    <location>
        <begin position="206"/>
        <end position="225"/>
    </location>
</feature>
<feature type="region of interest" description="Disordered" evidence="5">
    <location>
        <begin position="315"/>
        <end position="364"/>
    </location>
</feature>
<feature type="region of interest" description="Disordered" evidence="5">
    <location>
        <begin position="644"/>
        <end position="664"/>
    </location>
</feature>
<feature type="compositionally biased region" description="Basic and acidic residues" evidence="5">
    <location>
        <begin position="210"/>
        <end position="219"/>
    </location>
</feature>
<feature type="compositionally biased region" description="Low complexity" evidence="5">
    <location>
        <begin position="334"/>
        <end position="348"/>
    </location>
</feature>
<feature type="compositionally biased region" description="Polar residues" evidence="5">
    <location>
        <begin position="644"/>
        <end position="658"/>
    </location>
</feature>
<feature type="glycosylation site" description="N-linked (GlcNAc...) asparagine" evidence="4">
    <location>
        <position position="234"/>
    </location>
</feature>
<feature type="glycosylation site" description="N-linked (GlcNAc...) asparagine" evidence="4">
    <location>
        <position position="336"/>
    </location>
</feature>
<feature type="glycosylation site" description="N-linked (GlcNAc...) asparagine" evidence="4">
    <location>
        <position position="339"/>
    </location>
</feature>
<feature type="glycosylation site" description="N-linked (GlcNAc...) asparagine" evidence="4">
    <location>
        <position position="348"/>
    </location>
</feature>
<feature type="glycosylation site" description="N-linked (GlcNAc...) asparagine" evidence="4">
    <location>
        <position position="655"/>
    </location>
</feature>
<feature type="sequence conflict" description="In Ref. 1; AAX11929." evidence="6" ref="1">
    <original>T</original>
    <variation>I</variation>
    <location>
        <position position="215"/>
    </location>
</feature>
<feature type="sequence conflict" description="In Ref. 1; AAX11929." evidence="6" ref="1">
    <original>I</original>
    <variation>T</variation>
    <location>
        <position position="624"/>
    </location>
</feature>
<proteinExistence type="evidence at transcript level"/>
<evidence type="ECO:0000250" key="1">
    <source>
        <dbReference type="UniProtKB" id="P91193"/>
    </source>
</evidence>
<evidence type="ECO:0000250" key="2">
    <source>
        <dbReference type="UniProtKB" id="Q7TQE6"/>
    </source>
</evidence>
<evidence type="ECO:0000250" key="3">
    <source>
        <dbReference type="UniProtKB" id="Q8N5G2"/>
    </source>
</evidence>
<evidence type="ECO:0000255" key="4"/>
<evidence type="ECO:0000256" key="5">
    <source>
        <dbReference type="SAM" id="MobiDB-lite"/>
    </source>
</evidence>
<evidence type="ECO:0000305" key="6"/>
<evidence type="ECO:0000312" key="7">
    <source>
        <dbReference type="EMBL" id="AAX11927.1"/>
    </source>
</evidence>
<evidence type="ECO:0000312" key="8">
    <source>
        <dbReference type="ZFIN" id="ZDB-GENE-040426-1097"/>
    </source>
</evidence>
<organism>
    <name type="scientific">Danio rerio</name>
    <name type="common">Zebrafish</name>
    <name type="synonym">Brachydanio rerio</name>
    <dbReference type="NCBI Taxonomy" id="7955"/>
    <lineage>
        <taxon>Eukaryota</taxon>
        <taxon>Metazoa</taxon>
        <taxon>Chordata</taxon>
        <taxon>Craniata</taxon>
        <taxon>Vertebrata</taxon>
        <taxon>Euteleostomi</taxon>
        <taxon>Actinopterygii</taxon>
        <taxon>Neopterygii</taxon>
        <taxon>Teleostei</taxon>
        <taxon>Ostariophysi</taxon>
        <taxon>Cypriniformes</taxon>
        <taxon>Danionidae</taxon>
        <taxon>Danioninae</taxon>
        <taxon>Danio</taxon>
    </lineage>
</organism>
<keyword id="KW-0256">Endoplasmic reticulum</keyword>
<keyword id="KW-0325">Glycoprotein</keyword>
<keyword id="KW-0472">Membrane</keyword>
<keyword id="KW-0539">Nucleus</keyword>
<keyword id="KW-1185">Reference proteome</keyword>
<keyword id="KW-0812">Transmembrane</keyword>
<keyword id="KW-1133">Transmembrane helix</keyword>
<gene>
    <name evidence="8" type="primary">Maco1a</name>
    <name type="synonym">tmem57a</name>
    <name type="ORF">si:dkey-264p5.3</name>
</gene>
<name>MACO1_DANRE</name>
<comment type="function">
    <text evidence="3">May play a role in the regulation of neuronal activity.</text>
</comment>
<comment type="subcellular location">
    <subcellularLocation>
        <location evidence="2">Nucleus membrane</location>
        <topology evidence="4">Multi-pass membrane protein</topology>
    </subcellularLocation>
    <subcellularLocation>
        <location evidence="1">Rough endoplasmic reticulum membrane</location>
        <topology evidence="4">Multi-pass membrane protein</topology>
    </subcellularLocation>
</comment>
<comment type="similarity">
    <text evidence="4">Belongs to the macoilin family.</text>
</comment>